<sequence>MIVEKRRFPSPSQHVRLYTICYLSNGLRVKGLLAEPAEPGQYDGFLYLRGGIKSVGMVRPGRIIQFASQGFVVFAPFYRGNQGGEGNEDFAGEDREDAFSAFRLLQQHPNVKKDRIHIFGFSRGGIMGMLTAIEMGGQAASFVSWGGVSDMILTYEERQDLRRMMKRVIGGTPKKVPEEYQWRTPFDQVNKIQAPVLLIHGEKDQNVSIQHSYLLEEKLKQLHKPVETWYYSTFTHYFPPKENRRIVRQLTQWMKNR</sequence>
<organism>
    <name type="scientific">Bacillus subtilis (strain 168)</name>
    <dbReference type="NCBI Taxonomy" id="224308"/>
    <lineage>
        <taxon>Bacteria</taxon>
        <taxon>Bacillati</taxon>
        <taxon>Bacillota</taxon>
        <taxon>Bacilli</taxon>
        <taxon>Bacillales</taxon>
        <taxon>Bacillaceae</taxon>
        <taxon>Bacillus</taxon>
    </lineage>
</organism>
<dbReference type="EC" id="3.4.21.-"/>
<dbReference type="EMBL" id="AF008220">
    <property type="protein sequence ID" value="AAC00240.1"/>
    <property type="molecule type" value="Genomic_DNA"/>
</dbReference>
<dbReference type="EMBL" id="AL009126">
    <property type="protein sequence ID" value="CAB15036.1"/>
    <property type="molecule type" value="Genomic_DNA"/>
</dbReference>
<dbReference type="PIR" id="A69996">
    <property type="entry name" value="A69996"/>
</dbReference>
<dbReference type="RefSeq" id="NP_390936.1">
    <property type="nucleotide sequence ID" value="NC_000964.3"/>
</dbReference>
<dbReference type="RefSeq" id="WP_003246204.1">
    <property type="nucleotide sequence ID" value="NZ_OZ025638.1"/>
</dbReference>
<dbReference type="SMR" id="O34493"/>
<dbReference type="FunCoup" id="O34493">
    <property type="interactions" value="136"/>
</dbReference>
<dbReference type="STRING" id="224308.BSU30580"/>
<dbReference type="ESTHER" id="bacsu-YTMA">
    <property type="family name" value="ACPH_Peptidase_S9"/>
</dbReference>
<dbReference type="MEROPS" id="S09.B06"/>
<dbReference type="PaxDb" id="224308-BSU30580"/>
<dbReference type="EnsemblBacteria" id="CAB15036">
    <property type="protein sequence ID" value="CAB15036"/>
    <property type="gene ID" value="BSU_30580"/>
</dbReference>
<dbReference type="GeneID" id="936383"/>
<dbReference type="KEGG" id="bsu:BSU30580"/>
<dbReference type="PATRIC" id="fig|224308.179.peg.3316"/>
<dbReference type="eggNOG" id="COG1506">
    <property type="taxonomic scope" value="Bacteria"/>
</dbReference>
<dbReference type="InParanoid" id="O34493"/>
<dbReference type="OrthoDB" id="9812921at2"/>
<dbReference type="PhylomeDB" id="O34493"/>
<dbReference type="BioCyc" id="BSUB:BSU30580-MONOMER"/>
<dbReference type="Proteomes" id="UP000001570">
    <property type="component" value="Chromosome"/>
</dbReference>
<dbReference type="GO" id="GO:0004252">
    <property type="term" value="F:serine-type endopeptidase activity"/>
    <property type="evidence" value="ECO:0007669"/>
    <property type="project" value="InterPro"/>
</dbReference>
<dbReference type="GO" id="GO:0006508">
    <property type="term" value="P:proteolysis"/>
    <property type="evidence" value="ECO:0007669"/>
    <property type="project" value="UniProtKB-KW"/>
</dbReference>
<dbReference type="Gene3D" id="3.40.50.1820">
    <property type="entry name" value="alpha/beta hydrolase"/>
    <property type="match status" value="1"/>
</dbReference>
<dbReference type="InterPro" id="IPR029058">
    <property type="entry name" value="AB_hydrolase_fold"/>
</dbReference>
<dbReference type="InterPro" id="IPR002471">
    <property type="entry name" value="Pept_S9_AS"/>
</dbReference>
<dbReference type="InterPro" id="IPR001375">
    <property type="entry name" value="Peptidase_S9_cat"/>
</dbReference>
<dbReference type="PANTHER" id="PTHR42776:SF27">
    <property type="entry name" value="DIPEPTIDYL PEPTIDASE FAMILY MEMBER 6"/>
    <property type="match status" value="1"/>
</dbReference>
<dbReference type="PANTHER" id="PTHR42776">
    <property type="entry name" value="SERINE PEPTIDASE S9 FAMILY MEMBER"/>
    <property type="match status" value="1"/>
</dbReference>
<dbReference type="Pfam" id="PF00326">
    <property type="entry name" value="Peptidase_S9"/>
    <property type="match status" value="1"/>
</dbReference>
<dbReference type="SUPFAM" id="SSF53474">
    <property type="entry name" value="alpha/beta-Hydrolases"/>
    <property type="match status" value="1"/>
</dbReference>
<dbReference type="PROSITE" id="PS00708">
    <property type="entry name" value="PRO_ENDOPEP_SER"/>
    <property type="match status" value="1"/>
</dbReference>
<accession>O34493</accession>
<accession>Q795P4</accession>
<proteinExistence type="inferred from homology"/>
<feature type="chain" id="PRO_0000360204" description="Uncharacterized peptidase YtmA">
    <location>
        <begin position="1"/>
        <end position="257"/>
    </location>
</feature>
<feature type="active site" description="Charge relay system" evidence="1">
    <location>
        <position position="122"/>
    </location>
</feature>
<feature type="active site" description="Charge relay system" evidence="1">
    <location>
        <position position="236"/>
    </location>
</feature>
<comment type="similarity">
    <text evidence="2">Belongs to the peptidase S9B family.</text>
</comment>
<keyword id="KW-0378">Hydrolase</keyword>
<keyword id="KW-0645">Protease</keyword>
<keyword id="KW-1185">Reference proteome</keyword>
<keyword id="KW-0720">Serine protease</keyword>
<name>YTMA_BACSU</name>
<gene>
    <name type="primary">ytmA</name>
    <name type="ordered locus">BSU30580</name>
</gene>
<evidence type="ECO:0000255" key="1">
    <source>
        <dbReference type="PROSITE-ProRule" id="PRU10084"/>
    </source>
</evidence>
<evidence type="ECO:0000305" key="2"/>
<protein>
    <recommendedName>
        <fullName>Uncharacterized peptidase YtmA</fullName>
        <ecNumber>3.4.21.-</ecNumber>
    </recommendedName>
</protein>
<reference key="1">
    <citation type="journal article" date="1997" name="Microbiology">
        <title>Sequencing and functional annotation of the Bacillus subtilis genes in the 200 kb rrnB-dnaB region.</title>
        <authorList>
            <person name="Lapidus A."/>
            <person name="Galleron N."/>
            <person name="Sorokin A."/>
            <person name="Ehrlich S.D."/>
        </authorList>
    </citation>
    <scope>NUCLEOTIDE SEQUENCE [GENOMIC DNA]</scope>
</reference>
<reference key="2">
    <citation type="journal article" date="1997" name="Nature">
        <title>The complete genome sequence of the Gram-positive bacterium Bacillus subtilis.</title>
        <authorList>
            <person name="Kunst F."/>
            <person name="Ogasawara N."/>
            <person name="Moszer I."/>
            <person name="Albertini A.M."/>
            <person name="Alloni G."/>
            <person name="Azevedo V."/>
            <person name="Bertero M.G."/>
            <person name="Bessieres P."/>
            <person name="Bolotin A."/>
            <person name="Borchert S."/>
            <person name="Borriss R."/>
            <person name="Boursier L."/>
            <person name="Brans A."/>
            <person name="Braun M."/>
            <person name="Brignell S.C."/>
            <person name="Bron S."/>
            <person name="Brouillet S."/>
            <person name="Bruschi C.V."/>
            <person name="Caldwell B."/>
            <person name="Capuano V."/>
            <person name="Carter N.M."/>
            <person name="Choi S.-K."/>
            <person name="Codani J.-J."/>
            <person name="Connerton I.F."/>
            <person name="Cummings N.J."/>
            <person name="Daniel R.A."/>
            <person name="Denizot F."/>
            <person name="Devine K.M."/>
            <person name="Duesterhoeft A."/>
            <person name="Ehrlich S.D."/>
            <person name="Emmerson P.T."/>
            <person name="Entian K.-D."/>
            <person name="Errington J."/>
            <person name="Fabret C."/>
            <person name="Ferrari E."/>
            <person name="Foulger D."/>
            <person name="Fritz C."/>
            <person name="Fujita M."/>
            <person name="Fujita Y."/>
            <person name="Fuma S."/>
            <person name="Galizzi A."/>
            <person name="Galleron N."/>
            <person name="Ghim S.-Y."/>
            <person name="Glaser P."/>
            <person name="Goffeau A."/>
            <person name="Golightly E.J."/>
            <person name="Grandi G."/>
            <person name="Guiseppi G."/>
            <person name="Guy B.J."/>
            <person name="Haga K."/>
            <person name="Haiech J."/>
            <person name="Harwood C.R."/>
            <person name="Henaut A."/>
            <person name="Hilbert H."/>
            <person name="Holsappel S."/>
            <person name="Hosono S."/>
            <person name="Hullo M.-F."/>
            <person name="Itaya M."/>
            <person name="Jones L.-M."/>
            <person name="Joris B."/>
            <person name="Karamata D."/>
            <person name="Kasahara Y."/>
            <person name="Klaerr-Blanchard M."/>
            <person name="Klein C."/>
            <person name="Kobayashi Y."/>
            <person name="Koetter P."/>
            <person name="Koningstein G."/>
            <person name="Krogh S."/>
            <person name="Kumano M."/>
            <person name="Kurita K."/>
            <person name="Lapidus A."/>
            <person name="Lardinois S."/>
            <person name="Lauber J."/>
            <person name="Lazarevic V."/>
            <person name="Lee S.-M."/>
            <person name="Levine A."/>
            <person name="Liu H."/>
            <person name="Masuda S."/>
            <person name="Mauel C."/>
            <person name="Medigue C."/>
            <person name="Medina N."/>
            <person name="Mellado R.P."/>
            <person name="Mizuno M."/>
            <person name="Moestl D."/>
            <person name="Nakai S."/>
            <person name="Noback M."/>
            <person name="Noone D."/>
            <person name="O'Reilly M."/>
            <person name="Ogawa K."/>
            <person name="Ogiwara A."/>
            <person name="Oudega B."/>
            <person name="Park S.-H."/>
            <person name="Parro V."/>
            <person name="Pohl T.M."/>
            <person name="Portetelle D."/>
            <person name="Porwollik S."/>
            <person name="Prescott A.M."/>
            <person name="Presecan E."/>
            <person name="Pujic P."/>
            <person name="Purnelle B."/>
            <person name="Rapoport G."/>
            <person name="Rey M."/>
            <person name="Reynolds S."/>
            <person name="Rieger M."/>
            <person name="Rivolta C."/>
            <person name="Rocha E."/>
            <person name="Roche B."/>
            <person name="Rose M."/>
            <person name="Sadaie Y."/>
            <person name="Sato T."/>
            <person name="Scanlan E."/>
            <person name="Schleich S."/>
            <person name="Schroeter R."/>
            <person name="Scoffone F."/>
            <person name="Sekiguchi J."/>
            <person name="Sekowska A."/>
            <person name="Seror S.J."/>
            <person name="Serror P."/>
            <person name="Shin B.-S."/>
            <person name="Soldo B."/>
            <person name="Sorokin A."/>
            <person name="Tacconi E."/>
            <person name="Takagi T."/>
            <person name="Takahashi H."/>
            <person name="Takemaru K."/>
            <person name="Takeuchi M."/>
            <person name="Tamakoshi A."/>
            <person name="Tanaka T."/>
            <person name="Terpstra P."/>
            <person name="Tognoni A."/>
            <person name="Tosato V."/>
            <person name="Uchiyama S."/>
            <person name="Vandenbol M."/>
            <person name="Vannier F."/>
            <person name="Vassarotti A."/>
            <person name="Viari A."/>
            <person name="Wambutt R."/>
            <person name="Wedler E."/>
            <person name="Wedler H."/>
            <person name="Weitzenegger T."/>
            <person name="Winters P."/>
            <person name="Wipat A."/>
            <person name="Yamamoto H."/>
            <person name="Yamane K."/>
            <person name="Yasumoto K."/>
            <person name="Yata K."/>
            <person name="Yoshida K."/>
            <person name="Yoshikawa H.-F."/>
            <person name="Zumstein E."/>
            <person name="Yoshikawa H."/>
            <person name="Danchin A."/>
        </authorList>
    </citation>
    <scope>NUCLEOTIDE SEQUENCE [LARGE SCALE GENOMIC DNA]</scope>
    <source>
        <strain>168</strain>
    </source>
</reference>